<organism>
    <name type="scientific">Clostridium perfringens (strain SM101 / Type A)</name>
    <dbReference type="NCBI Taxonomy" id="289380"/>
    <lineage>
        <taxon>Bacteria</taxon>
        <taxon>Bacillati</taxon>
        <taxon>Bacillota</taxon>
        <taxon>Clostridia</taxon>
        <taxon>Eubacteriales</taxon>
        <taxon>Clostridiaceae</taxon>
        <taxon>Clostridium</taxon>
    </lineage>
</organism>
<evidence type="ECO:0000255" key="1">
    <source>
        <dbReference type="HAMAP-Rule" id="MF_01367"/>
    </source>
</evidence>
<evidence type="ECO:0000305" key="2"/>
<accession>Q0SQF4</accession>
<reference key="1">
    <citation type="journal article" date="2006" name="Genome Res.">
        <title>Skewed genomic variability in strains of the toxigenic bacterial pathogen, Clostridium perfringens.</title>
        <authorList>
            <person name="Myers G.S.A."/>
            <person name="Rasko D.A."/>
            <person name="Cheung J.K."/>
            <person name="Ravel J."/>
            <person name="Seshadri R."/>
            <person name="DeBoy R.T."/>
            <person name="Ren Q."/>
            <person name="Varga J."/>
            <person name="Awad M.M."/>
            <person name="Brinkac L.M."/>
            <person name="Daugherty S.C."/>
            <person name="Haft D.H."/>
            <person name="Dodson R.J."/>
            <person name="Madupu R."/>
            <person name="Nelson W.C."/>
            <person name="Rosovitz M.J."/>
            <person name="Sullivan S.A."/>
            <person name="Khouri H."/>
            <person name="Dimitrov G.I."/>
            <person name="Watkins K.L."/>
            <person name="Mulligan S."/>
            <person name="Benton J."/>
            <person name="Radune D."/>
            <person name="Fisher D.J."/>
            <person name="Atkins H.S."/>
            <person name="Hiscox T."/>
            <person name="Jost B.H."/>
            <person name="Billington S.J."/>
            <person name="Songer J.G."/>
            <person name="McClane B.A."/>
            <person name="Titball R.W."/>
            <person name="Rood J.I."/>
            <person name="Melville S.B."/>
            <person name="Paulsen I.T."/>
        </authorList>
    </citation>
    <scope>NUCLEOTIDE SEQUENCE [LARGE SCALE GENOMIC DNA]</scope>
    <source>
        <strain>SM101 / Type A</strain>
    </source>
</reference>
<feature type="chain" id="PRO_1000055565" description="Large ribosomal subunit protein uL14">
    <location>
        <begin position="1"/>
        <end position="122"/>
    </location>
</feature>
<name>RL14_CLOPS</name>
<proteinExistence type="inferred from homology"/>
<dbReference type="EMBL" id="CP000312">
    <property type="protein sequence ID" value="ABG85547.1"/>
    <property type="molecule type" value="Genomic_DNA"/>
</dbReference>
<dbReference type="RefSeq" id="WP_003454425.1">
    <property type="nucleotide sequence ID" value="NZ_CAXVKH010000004.1"/>
</dbReference>
<dbReference type="SMR" id="Q0SQF4"/>
<dbReference type="GeneID" id="93001019"/>
<dbReference type="KEGG" id="cpr:CPR_2389"/>
<dbReference type="Proteomes" id="UP000001824">
    <property type="component" value="Chromosome"/>
</dbReference>
<dbReference type="GO" id="GO:0022625">
    <property type="term" value="C:cytosolic large ribosomal subunit"/>
    <property type="evidence" value="ECO:0007669"/>
    <property type="project" value="TreeGrafter"/>
</dbReference>
<dbReference type="GO" id="GO:0070180">
    <property type="term" value="F:large ribosomal subunit rRNA binding"/>
    <property type="evidence" value="ECO:0007669"/>
    <property type="project" value="TreeGrafter"/>
</dbReference>
<dbReference type="GO" id="GO:0003735">
    <property type="term" value="F:structural constituent of ribosome"/>
    <property type="evidence" value="ECO:0007669"/>
    <property type="project" value="InterPro"/>
</dbReference>
<dbReference type="GO" id="GO:0006412">
    <property type="term" value="P:translation"/>
    <property type="evidence" value="ECO:0007669"/>
    <property type="project" value="UniProtKB-UniRule"/>
</dbReference>
<dbReference type="CDD" id="cd00337">
    <property type="entry name" value="Ribosomal_uL14"/>
    <property type="match status" value="1"/>
</dbReference>
<dbReference type="FunFam" id="2.40.150.20:FF:000001">
    <property type="entry name" value="50S ribosomal protein L14"/>
    <property type="match status" value="1"/>
</dbReference>
<dbReference type="Gene3D" id="2.40.150.20">
    <property type="entry name" value="Ribosomal protein L14"/>
    <property type="match status" value="1"/>
</dbReference>
<dbReference type="HAMAP" id="MF_01367">
    <property type="entry name" value="Ribosomal_uL14"/>
    <property type="match status" value="1"/>
</dbReference>
<dbReference type="InterPro" id="IPR000218">
    <property type="entry name" value="Ribosomal_uL14"/>
</dbReference>
<dbReference type="InterPro" id="IPR005745">
    <property type="entry name" value="Ribosomal_uL14_bac-type"/>
</dbReference>
<dbReference type="InterPro" id="IPR019972">
    <property type="entry name" value="Ribosomal_uL14_CS"/>
</dbReference>
<dbReference type="InterPro" id="IPR036853">
    <property type="entry name" value="Ribosomal_uL14_sf"/>
</dbReference>
<dbReference type="NCBIfam" id="TIGR01067">
    <property type="entry name" value="rplN_bact"/>
    <property type="match status" value="1"/>
</dbReference>
<dbReference type="PANTHER" id="PTHR11761">
    <property type="entry name" value="50S/60S RIBOSOMAL PROTEIN L14/L23"/>
    <property type="match status" value="1"/>
</dbReference>
<dbReference type="PANTHER" id="PTHR11761:SF3">
    <property type="entry name" value="LARGE RIBOSOMAL SUBUNIT PROTEIN UL14M"/>
    <property type="match status" value="1"/>
</dbReference>
<dbReference type="Pfam" id="PF00238">
    <property type="entry name" value="Ribosomal_L14"/>
    <property type="match status" value="1"/>
</dbReference>
<dbReference type="SMART" id="SM01374">
    <property type="entry name" value="Ribosomal_L14"/>
    <property type="match status" value="1"/>
</dbReference>
<dbReference type="SUPFAM" id="SSF50193">
    <property type="entry name" value="Ribosomal protein L14"/>
    <property type="match status" value="1"/>
</dbReference>
<dbReference type="PROSITE" id="PS00049">
    <property type="entry name" value="RIBOSOMAL_L14"/>
    <property type="match status" value="1"/>
</dbReference>
<sequence length="122" mass="13232">MIQQQTLLKVADNSGAKEIMCIRVLGGSKRKFGNIGDVIVASVKSATPGGVVKKGEVVKAVIVRSVRGLRRADGSYIKFDENAAVIIKDDKQPRGTRIFGPVARELRDNEFNKILSLAPEVL</sequence>
<protein>
    <recommendedName>
        <fullName evidence="1">Large ribosomal subunit protein uL14</fullName>
    </recommendedName>
    <alternativeName>
        <fullName evidence="2">50S ribosomal protein L14</fullName>
    </alternativeName>
</protein>
<keyword id="KW-0687">Ribonucleoprotein</keyword>
<keyword id="KW-0689">Ribosomal protein</keyword>
<keyword id="KW-0694">RNA-binding</keyword>
<keyword id="KW-0699">rRNA-binding</keyword>
<gene>
    <name evidence="1" type="primary">rplN</name>
    <name type="ordered locus">CPR_2389</name>
</gene>
<comment type="function">
    <text evidence="1">Binds to 23S rRNA. Forms part of two intersubunit bridges in the 70S ribosome.</text>
</comment>
<comment type="subunit">
    <text evidence="1">Part of the 50S ribosomal subunit. Forms a cluster with proteins L3 and L19. In the 70S ribosome, L14 and L19 interact and together make contacts with the 16S rRNA in bridges B5 and B8.</text>
</comment>
<comment type="similarity">
    <text evidence="1">Belongs to the universal ribosomal protein uL14 family.</text>
</comment>